<sequence>MPLAKDLLHPSPEEEKRKHKKKRLVQSPNSYFMDVKCPGCYKITTVFSHAQTVVLCVGCSTVLCQPTGGKARLTEGCSFRRKQH</sequence>
<comment type="function">
    <text evidence="1 4">Component of the small ribosomal subunit (PubMed:36517592). The ribosome is a large ribonucleoprotein complex responsible for the synthesis of proteins in the cell (PubMed:36517592). Required for proper rRNA processing and maturation of 18S rRNAs (By similarity). Part of the small subunit (SSU) processome, first precursor of the small eukaryotic ribosomal subunit. During the assembly of the SSU processome in the nucleolus, many ribosome biogenesis factors, an RNA chaperone and ribosomal proteins associate with the nascent pre-rRNA and work in concert to generate RNA folding, modifications, rearrangements and cleavage as well as targeted degradation of pre-ribosomal RNA by the RNA exosome (By similarity).</text>
</comment>
<comment type="cofactor">
    <cofactor evidence="5">
        <name>Zn(2+)</name>
        <dbReference type="ChEBI" id="CHEBI:29105"/>
    </cofactor>
    <text evidence="5">Binds 1 zinc ion per subunit.</text>
</comment>
<comment type="subunit">
    <text evidence="1 4">Component of the small ribosomal subunit. Part of the small subunit (SSU) processome, composed of more than 70 proteins and the RNA chaperone small nucleolar RNA (snoRNA) U3 (By similarity).</text>
</comment>
<comment type="subcellular location">
    <subcellularLocation>
        <location evidence="4">Cytoplasm</location>
    </subcellularLocation>
    <subcellularLocation>
        <location evidence="1">Nucleus</location>
        <location evidence="1">Nucleolus</location>
    </subcellularLocation>
</comment>
<comment type="similarity">
    <text evidence="5">Belongs to the eukaryotic ribosomal protein eS27 family.</text>
</comment>
<protein>
    <recommendedName>
        <fullName evidence="5">Small ribosomal subunit protein eS27</fullName>
    </recommendedName>
    <alternativeName>
        <fullName>40S ribosomal protein S27</fullName>
    </alternativeName>
</protein>
<accession>Q6ZWU9</accession>
<accession>Q3TLE3</accession>
<name>RS27_MOUSE</name>
<evidence type="ECO:0000250" key="1">
    <source>
        <dbReference type="UniProtKB" id="P42677"/>
    </source>
</evidence>
<evidence type="ECO:0000255" key="2"/>
<evidence type="ECO:0000256" key="3">
    <source>
        <dbReference type="SAM" id="MobiDB-lite"/>
    </source>
</evidence>
<evidence type="ECO:0000269" key="4">
    <source>
    </source>
</evidence>
<evidence type="ECO:0000305" key="5"/>
<evidence type="ECO:0000312" key="6">
    <source>
        <dbReference type="EMBL" id="AAH55693.1"/>
    </source>
</evidence>
<evidence type="ECO:0000312" key="7">
    <source>
        <dbReference type="MGI" id="MGI:1888676"/>
    </source>
</evidence>
<evidence type="ECO:0007744" key="8">
    <source>
        <dbReference type="PDB" id="7CPU"/>
    </source>
</evidence>
<evidence type="ECO:0007744" key="9">
    <source>
        <dbReference type="PDB" id="7CPV"/>
    </source>
</evidence>
<evidence type="ECO:0007744" key="10">
    <source>
    </source>
</evidence>
<evidence type="ECO:0007744" key="11">
    <source>
    </source>
</evidence>
<dbReference type="EMBL" id="AK014294">
    <property type="protein sequence ID" value="BAB29250.1"/>
    <property type="molecule type" value="mRNA"/>
</dbReference>
<dbReference type="EMBL" id="AK088320">
    <property type="protein sequence ID" value="BAC40279.1"/>
    <property type="molecule type" value="mRNA"/>
</dbReference>
<dbReference type="EMBL" id="AK166551">
    <property type="protein sequence ID" value="BAE38849.1"/>
    <property type="molecule type" value="mRNA"/>
</dbReference>
<dbReference type="EMBL" id="BC048352">
    <property type="protein sequence ID" value="AAH48352.1"/>
    <property type="molecule type" value="mRNA"/>
</dbReference>
<dbReference type="EMBL" id="BC055693">
    <property type="protein sequence ID" value="AAH55693.1"/>
    <property type="molecule type" value="mRNA"/>
</dbReference>
<dbReference type="CCDS" id="CCDS50970.1"/>
<dbReference type="RefSeq" id="NP_001177187.1">
    <property type="nucleotide sequence ID" value="NM_001190258.1"/>
</dbReference>
<dbReference type="RefSeq" id="NP_081291.1">
    <property type="nucleotide sequence ID" value="NM_027015.4"/>
</dbReference>
<dbReference type="PDB" id="7CPU">
    <property type="method" value="EM"/>
    <property type="resolution" value="2.82 A"/>
    <property type="chains" value="Sb=1-84"/>
</dbReference>
<dbReference type="PDB" id="7CPV">
    <property type="method" value="EM"/>
    <property type="resolution" value="3.03 A"/>
    <property type="chains" value="Sb=1-84"/>
</dbReference>
<dbReference type="PDBsum" id="7CPU"/>
<dbReference type="PDBsum" id="7CPV"/>
<dbReference type="EMDB" id="EMD-30432"/>
<dbReference type="EMDB" id="EMD-30433"/>
<dbReference type="SMR" id="Q6ZWU9"/>
<dbReference type="BioGRID" id="208248">
    <property type="interactions" value="39"/>
</dbReference>
<dbReference type="BioGRID" id="786971">
    <property type="interactions" value="4"/>
</dbReference>
<dbReference type="ComplexPortal" id="CPX-5261">
    <property type="entry name" value="40S cytosolic small ribosomal subunit"/>
</dbReference>
<dbReference type="FunCoup" id="Q6ZWU9">
    <property type="interactions" value="1604"/>
</dbReference>
<dbReference type="IntAct" id="Q6ZWU9">
    <property type="interactions" value="2"/>
</dbReference>
<dbReference type="MINT" id="Q6ZWU9"/>
<dbReference type="STRING" id="10090.ENSMUSP00000060523"/>
<dbReference type="GlyGen" id="Q6ZWU9">
    <property type="glycosylation" value="1 site, 1 O-linked glycan (1 site)"/>
</dbReference>
<dbReference type="iPTMnet" id="Q6ZWU9"/>
<dbReference type="PhosphoSitePlus" id="Q6ZWU9"/>
<dbReference type="SwissPalm" id="Q6ZWU9"/>
<dbReference type="jPOST" id="Q6ZWU9"/>
<dbReference type="PaxDb" id="10090-ENSMUSP00000060523"/>
<dbReference type="PeptideAtlas" id="Q6ZWU9"/>
<dbReference type="ProteomicsDB" id="260855"/>
<dbReference type="Pumba" id="Q6ZWU9"/>
<dbReference type="TopDownProteomics" id="Q6ZWU9"/>
<dbReference type="DNASU" id="57294"/>
<dbReference type="Ensembl" id="ENSMUST00000053150.8">
    <property type="protein sequence ID" value="ENSMUSP00000060523.6"/>
    <property type="gene ID" value="ENSMUSG00000050621.8"/>
</dbReference>
<dbReference type="Ensembl" id="ENSMUST00000170122.4">
    <property type="protein sequence ID" value="ENSMUSP00000132102.3"/>
    <property type="gene ID" value="ENSMUSG00000090733.7"/>
</dbReference>
<dbReference type="GeneID" id="100043813"/>
<dbReference type="GeneID" id="57294"/>
<dbReference type="KEGG" id="mmu:100043813"/>
<dbReference type="KEGG" id="mmu:57294"/>
<dbReference type="UCSC" id="uc008qbl.2">
    <property type="organism name" value="mouse"/>
</dbReference>
<dbReference type="AGR" id="MGI:1888676"/>
<dbReference type="CTD" id="100043813"/>
<dbReference type="CTD" id="6232"/>
<dbReference type="MGI" id="MGI:1888676">
    <property type="gene designation" value="Rps27"/>
</dbReference>
<dbReference type="VEuPathDB" id="HostDB:ENSMUSG00000050621"/>
<dbReference type="VEuPathDB" id="HostDB:ENSMUSG00000090733"/>
<dbReference type="eggNOG" id="KOG1779">
    <property type="taxonomic scope" value="Eukaryota"/>
</dbReference>
<dbReference type="GeneTree" id="ENSGT00950000182891"/>
<dbReference type="HOGENOM" id="CLU_130128_3_0_1"/>
<dbReference type="InParanoid" id="Q6ZWU9"/>
<dbReference type="OMA" id="CASILCQ"/>
<dbReference type="OrthoDB" id="5567124at2759"/>
<dbReference type="PhylomeDB" id="Q6ZWU9"/>
<dbReference type="TreeFam" id="TF300265"/>
<dbReference type="Reactome" id="R-MMU-141444">
    <property type="pathway name" value="Amplification of signal from unattached kinetochores via a MAD2 inhibitory signal"/>
</dbReference>
<dbReference type="Reactome" id="R-MMU-156827">
    <property type="pathway name" value="L13a-mediated translational silencing of Ceruloplasmin expression"/>
</dbReference>
<dbReference type="Reactome" id="R-MMU-1799339">
    <property type="pathway name" value="SRP-dependent cotranslational protein targeting to membrane"/>
</dbReference>
<dbReference type="Reactome" id="R-MMU-2467813">
    <property type="pathway name" value="Separation of Sister Chromatids"/>
</dbReference>
<dbReference type="Reactome" id="R-MMU-2500257">
    <property type="pathway name" value="Resolution of Sister Chromatid Cohesion"/>
</dbReference>
<dbReference type="Reactome" id="R-MMU-5663220">
    <property type="pathway name" value="RHO GTPases Activate Formins"/>
</dbReference>
<dbReference type="Reactome" id="R-MMU-6791226">
    <property type="pathway name" value="Major pathway of rRNA processing in the nucleolus and cytosol"/>
</dbReference>
<dbReference type="Reactome" id="R-MMU-68877">
    <property type="pathway name" value="Mitotic Prometaphase"/>
</dbReference>
<dbReference type="Reactome" id="R-MMU-72649">
    <property type="pathway name" value="Translation initiation complex formation"/>
</dbReference>
<dbReference type="Reactome" id="R-MMU-72689">
    <property type="pathway name" value="Formation of a pool of free 40S subunits"/>
</dbReference>
<dbReference type="Reactome" id="R-MMU-72695">
    <property type="pathway name" value="Formation of the ternary complex, and subsequently, the 43S complex"/>
</dbReference>
<dbReference type="Reactome" id="R-MMU-72702">
    <property type="pathway name" value="Ribosomal scanning and start codon recognition"/>
</dbReference>
<dbReference type="Reactome" id="R-MMU-72706">
    <property type="pathway name" value="GTP hydrolysis and joining of the 60S ribosomal subunit"/>
</dbReference>
<dbReference type="Reactome" id="R-MMU-9648025">
    <property type="pathway name" value="EML4 and NUDC in mitotic spindle formation"/>
</dbReference>
<dbReference type="Reactome" id="R-MMU-975956">
    <property type="pathway name" value="Nonsense Mediated Decay (NMD) independent of the Exon Junction Complex (EJC)"/>
</dbReference>
<dbReference type="Reactome" id="R-MMU-975957">
    <property type="pathway name" value="Nonsense Mediated Decay (NMD) enhanced by the Exon Junction Complex (EJC)"/>
</dbReference>
<dbReference type="BioGRID-ORCS" id="100043813">
    <property type="hits" value="14 hits in 43 CRISPR screens"/>
</dbReference>
<dbReference type="BioGRID-ORCS" id="57294">
    <property type="hits" value="28 hits in 57 CRISPR screens"/>
</dbReference>
<dbReference type="CD-CODE" id="CE726F99">
    <property type="entry name" value="Postsynaptic density"/>
</dbReference>
<dbReference type="ChiTaRS" id="Rps27">
    <property type="organism name" value="mouse"/>
</dbReference>
<dbReference type="PRO" id="PR:Q6ZWU9"/>
<dbReference type="Proteomes" id="UP000000589">
    <property type="component" value="Chromosome 3"/>
</dbReference>
<dbReference type="Proteomes" id="UP000000589">
    <property type="component" value="Chromosome 9"/>
</dbReference>
<dbReference type="RNAct" id="Q6ZWU9">
    <property type="molecule type" value="protein"/>
</dbReference>
<dbReference type="Bgee" id="ENSMUSG00000050621">
    <property type="expression patterns" value="Expressed in adrenal gland and 63 other cell types or tissues"/>
</dbReference>
<dbReference type="ExpressionAtlas" id="Q6ZWU9">
    <property type="expression patterns" value="baseline and differential"/>
</dbReference>
<dbReference type="GO" id="GO:0005829">
    <property type="term" value="C:cytosol"/>
    <property type="evidence" value="ECO:0000304"/>
    <property type="project" value="Reactome"/>
</dbReference>
<dbReference type="GO" id="GO:0022627">
    <property type="term" value="C:cytosolic small ribosomal subunit"/>
    <property type="evidence" value="ECO:0000314"/>
    <property type="project" value="UniProtKB"/>
</dbReference>
<dbReference type="GO" id="GO:0005730">
    <property type="term" value="C:nucleolus"/>
    <property type="evidence" value="ECO:0007669"/>
    <property type="project" value="UniProtKB-SubCell"/>
</dbReference>
<dbReference type="GO" id="GO:0098794">
    <property type="term" value="C:postsynapse"/>
    <property type="evidence" value="ECO:0000314"/>
    <property type="project" value="SynGO"/>
</dbReference>
<dbReference type="GO" id="GO:0098793">
    <property type="term" value="C:presynapse"/>
    <property type="evidence" value="ECO:0000314"/>
    <property type="project" value="SynGO"/>
</dbReference>
<dbReference type="GO" id="GO:0005840">
    <property type="term" value="C:ribosome"/>
    <property type="evidence" value="ECO:0000314"/>
    <property type="project" value="SynGO"/>
</dbReference>
<dbReference type="GO" id="GO:0032040">
    <property type="term" value="C:small-subunit processome"/>
    <property type="evidence" value="ECO:0000250"/>
    <property type="project" value="UniProtKB"/>
</dbReference>
<dbReference type="GO" id="GO:0045202">
    <property type="term" value="C:synapse"/>
    <property type="evidence" value="ECO:0000314"/>
    <property type="project" value="SynGO"/>
</dbReference>
<dbReference type="GO" id="GO:0003735">
    <property type="term" value="F:structural constituent of ribosome"/>
    <property type="evidence" value="ECO:0000314"/>
    <property type="project" value="UniProtKB"/>
</dbReference>
<dbReference type="GO" id="GO:0008270">
    <property type="term" value="F:zinc ion binding"/>
    <property type="evidence" value="ECO:0007669"/>
    <property type="project" value="UniProtKB-KW"/>
</dbReference>
<dbReference type="GO" id="GO:0042274">
    <property type="term" value="P:ribosomal small subunit biogenesis"/>
    <property type="evidence" value="ECO:0000250"/>
    <property type="project" value="UniProtKB"/>
</dbReference>
<dbReference type="GO" id="GO:0006364">
    <property type="term" value="P:rRNA processing"/>
    <property type="evidence" value="ECO:0000250"/>
    <property type="project" value="UniProtKB"/>
</dbReference>
<dbReference type="GO" id="GO:0140242">
    <property type="term" value="P:translation at postsynapse"/>
    <property type="evidence" value="ECO:0000314"/>
    <property type="project" value="SynGO"/>
</dbReference>
<dbReference type="GO" id="GO:0140236">
    <property type="term" value="P:translation at presynapse"/>
    <property type="evidence" value="ECO:0000314"/>
    <property type="project" value="SynGO"/>
</dbReference>
<dbReference type="FunFam" id="2.20.25.100:FF:000001">
    <property type="entry name" value="40S ribosomal protein S27"/>
    <property type="match status" value="1"/>
</dbReference>
<dbReference type="Gene3D" id="2.20.25.100">
    <property type="entry name" value="Zn-binding ribosomal proteins"/>
    <property type="match status" value="1"/>
</dbReference>
<dbReference type="HAMAP" id="MF_00371">
    <property type="entry name" value="Ribosomal_eS27"/>
    <property type="match status" value="1"/>
</dbReference>
<dbReference type="InterPro" id="IPR000592">
    <property type="entry name" value="Ribosomal_eS27"/>
</dbReference>
<dbReference type="InterPro" id="IPR023407">
    <property type="entry name" value="Ribosomal_eS27_Zn-bd_dom_sf"/>
</dbReference>
<dbReference type="InterPro" id="IPR011332">
    <property type="entry name" value="Ribosomal_zn-bd"/>
</dbReference>
<dbReference type="PANTHER" id="PTHR11594">
    <property type="entry name" value="40S RIBOSOMAL PROTEIN S27"/>
    <property type="match status" value="1"/>
</dbReference>
<dbReference type="Pfam" id="PF01667">
    <property type="entry name" value="Ribosomal_S27e"/>
    <property type="match status" value="1"/>
</dbReference>
<dbReference type="SUPFAM" id="SSF57829">
    <property type="entry name" value="Zn-binding ribosomal proteins"/>
    <property type="match status" value="1"/>
</dbReference>
<dbReference type="PROSITE" id="PS01168">
    <property type="entry name" value="RIBOSOMAL_S27E"/>
    <property type="match status" value="1"/>
</dbReference>
<organism>
    <name type="scientific">Mus musculus</name>
    <name type="common">Mouse</name>
    <dbReference type="NCBI Taxonomy" id="10090"/>
    <lineage>
        <taxon>Eukaryota</taxon>
        <taxon>Metazoa</taxon>
        <taxon>Chordata</taxon>
        <taxon>Craniata</taxon>
        <taxon>Vertebrata</taxon>
        <taxon>Euteleostomi</taxon>
        <taxon>Mammalia</taxon>
        <taxon>Eutheria</taxon>
        <taxon>Euarchontoglires</taxon>
        <taxon>Glires</taxon>
        <taxon>Rodentia</taxon>
        <taxon>Myomorpha</taxon>
        <taxon>Muroidea</taxon>
        <taxon>Muridae</taxon>
        <taxon>Murinae</taxon>
        <taxon>Mus</taxon>
        <taxon>Mus</taxon>
    </lineage>
</organism>
<proteinExistence type="evidence at protein level"/>
<reference key="1">
    <citation type="journal article" date="2005" name="Science">
        <title>The transcriptional landscape of the mammalian genome.</title>
        <authorList>
            <person name="Carninci P."/>
            <person name="Kasukawa T."/>
            <person name="Katayama S."/>
            <person name="Gough J."/>
            <person name="Frith M.C."/>
            <person name="Maeda N."/>
            <person name="Oyama R."/>
            <person name="Ravasi T."/>
            <person name="Lenhard B."/>
            <person name="Wells C."/>
            <person name="Kodzius R."/>
            <person name="Shimokawa K."/>
            <person name="Bajic V.B."/>
            <person name="Brenner S.E."/>
            <person name="Batalov S."/>
            <person name="Forrest A.R."/>
            <person name="Zavolan M."/>
            <person name="Davis M.J."/>
            <person name="Wilming L.G."/>
            <person name="Aidinis V."/>
            <person name="Allen J.E."/>
            <person name="Ambesi-Impiombato A."/>
            <person name="Apweiler R."/>
            <person name="Aturaliya R.N."/>
            <person name="Bailey T.L."/>
            <person name="Bansal M."/>
            <person name="Baxter L."/>
            <person name="Beisel K.W."/>
            <person name="Bersano T."/>
            <person name="Bono H."/>
            <person name="Chalk A.M."/>
            <person name="Chiu K.P."/>
            <person name="Choudhary V."/>
            <person name="Christoffels A."/>
            <person name="Clutterbuck D.R."/>
            <person name="Crowe M.L."/>
            <person name="Dalla E."/>
            <person name="Dalrymple B.P."/>
            <person name="de Bono B."/>
            <person name="Della Gatta G."/>
            <person name="di Bernardo D."/>
            <person name="Down T."/>
            <person name="Engstrom P."/>
            <person name="Fagiolini M."/>
            <person name="Faulkner G."/>
            <person name="Fletcher C.F."/>
            <person name="Fukushima T."/>
            <person name="Furuno M."/>
            <person name="Futaki S."/>
            <person name="Gariboldi M."/>
            <person name="Georgii-Hemming P."/>
            <person name="Gingeras T.R."/>
            <person name="Gojobori T."/>
            <person name="Green R.E."/>
            <person name="Gustincich S."/>
            <person name="Harbers M."/>
            <person name="Hayashi Y."/>
            <person name="Hensch T.K."/>
            <person name="Hirokawa N."/>
            <person name="Hill D."/>
            <person name="Huminiecki L."/>
            <person name="Iacono M."/>
            <person name="Ikeo K."/>
            <person name="Iwama A."/>
            <person name="Ishikawa T."/>
            <person name="Jakt M."/>
            <person name="Kanapin A."/>
            <person name="Katoh M."/>
            <person name="Kawasawa Y."/>
            <person name="Kelso J."/>
            <person name="Kitamura H."/>
            <person name="Kitano H."/>
            <person name="Kollias G."/>
            <person name="Krishnan S.P."/>
            <person name="Kruger A."/>
            <person name="Kummerfeld S.K."/>
            <person name="Kurochkin I.V."/>
            <person name="Lareau L.F."/>
            <person name="Lazarevic D."/>
            <person name="Lipovich L."/>
            <person name="Liu J."/>
            <person name="Liuni S."/>
            <person name="McWilliam S."/>
            <person name="Madan Babu M."/>
            <person name="Madera M."/>
            <person name="Marchionni L."/>
            <person name="Matsuda H."/>
            <person name="Matsuzawa S."/>
            <person name="Miki H."/>
            <person name="Mignone F."/>
            <person name="Miyake S."/>
            <person name="Morris K."/>
            <person name="Mottagui-Tabar S."/>
            <person name="Mulder N."/>
            <person name="Nakano N."/>
            <person name="Nakauchi H."/>
            <person name="Ng P."/>
            <person name="Nilsson R."/>
            <person name="Nishiguchi S."/>
            <person name="Nishikawa S."/>
            <person name="Nori F."/>
            <person name="Ohara O."/>
            <person name="Okazaki Y."/>
            <person name="Orlando V."/>
            <person name="Pang K.C."/>
            <person name="Pavan W.J."/>
            <person name="Pavesi G."/>
            <person name="Pesole G."/>
            <person name="Petrovsky N."/>
            <person name="Piazza S."/>
            <person name="Reed J."/>
            <person name="Reid J.F."/>
            <person name="Ring B.Z."/>
            <person name="Ringwald M."/>
            <person name="Rost B."/>
            <person name="Ruan Y."/>
            <person name="Salzberg S.L."/>
            <person name="Sandelin A."/>
            <person name="Schneider C."/>
            <person name="Schoenbach C."/>
            <person name="Sekiguchi K."/>
            <person name="Semple C.A."/>
            <person name="Seno S."/>
            <person name="Sessa L."/>
            <person name="Sheng Y."/>
            <person name="Shibata Y."/>
            <person name="Shimada H."/>
            <person name="Shimada K."/>
            <person name="Silva D."/>
            <person name="Sinclair B."/>
            <person name="Sperling S."/>
            <person name="Stupka E."/>
            <person name="Sugiura K."/>
            <person name="Sultana R."/>
            <person name="Takenaka Y."/>
            <person name="Taki K."/>
            <person name="Tammoja K."/>
            <person name="Tan S.L."/>
            <person name="Tang S."/>
            <person name="Taylor M.S."/>
            <person name="Tegner J."/>
            <person name="Teichmann S.A."/>
            <person name="Ueda H.R."/>
            <person name="van Nimwegen E."/>
            <person name="Verardo R."/>
            <person name="Wei C.L."/>
            <person name="Yagi K."/>
            <person name="Yamanishi H."/>
            <person name="Zabarovsky E."/>
            <person name="Zhu S."/>
            <person name="Zimmer A."/>
            <person name="Hide W."/>
            <person name="Bult C."/>
            <person name="Grimmond S.M."/>
            <person name="Teasdale R.D."/>
            <person name="Liu E.T."/>
            <person name="Brusic V."/>
            <person name="Quackenbush J."/>
            <person name="Wahlestedt C."/>
            <person name="Mattick J.S."/>
            <person name="Hume D.A."/>
            <person name="Kai C."/>
            <person name="Sasaki D."/>
            <person name="Tomaru Y."/>
            <person name="Fukuda S."/>
            <person name="Kanamori-Katayama M."/>
            <person name="Suzuki M."/>
            <person name="Aoki J."/>
            <person name="Arakawa T."/>
            <person name="Iida J."/>
            <person name="Imamura K."/>
            <person name="Itoh M."/>
            <person name="Kato T."/>
            <person name="Kawaji H."/>
            <person name="Kawagashira N."/>
            <person name="Kawashima T."/>
            <person name="Kojima M."/>
            <person name="Kondo S."/>
            <person name="Konno H."/>
            <person name="Nakano K."/>
            <person name="Ninomiya N."/>
            <person name="Nishio T."/>
            <person name="Okada M."/>
            <person name="Plessy C."/>
            <person name="Shibata K."/>
            <person name="Shiraki T."/>
            <person name="Suzuki S."/>
            <person name="Tagami M."/>
            <person name="Waki K."/>
            <person name="Watahiki A."/>
            <person name="Okamura-Oho Y."/>
            <person name="Suzuki H."/>
            <person name="Kawai J."/>
            <person name="Hayashizaki Y."/>
        </authorList>
    </citation>
    <scope>NUCLEOTIDE SEQUENCE [LARGE SCALE MRNA]</scope>
    <source>
        <strain>C57BL/6J</strain>
        <strain>NOD</strain>
        <tissue>Head</tissue>
        <tissue>Thymus</tissue>
    </source>
</reference>
<reference evidence="6" key="2">
    <citation type="journal article" date="2004" name="Genome Res.">
        <title>The status, quality, and expansion of the NIH full-length cDNA project: the Mammalian Gene Collection (MGC).</title>
        <authorList>
            <consortium name="The MGC Project Team"/>
        </authorList>
    </citation>
    <scope>NUCLEOTIDE SEQUENCE [LARGE SCALE MRNA]</scope>
    <source>
        <strain evidence="6">C57BL/6J</strain>
        <strain>FVB/N-3</strain>
        <tissue evidence="6">Brain</tissue>
        <tissue>Mammary gland</tissue>
    </source>
</reference>
<reference key="3">
    <citation type="journal article" date="2007" name="Proc. Natl. Acad. Sci. U.S.A.">
        <title>Large-scale phosphorylation analysis of mouse liver.</title>
        <authorList>
            <person name="Villen J."/>
            <person name="Beausoleil S.A."/>
            <person name="Gerber S.A."/>
            <person name="Gygi S.P."/>
        </authorList>
    </citation>
    <scope>PHOSPHORYLATION [LARGE SCALE ANALYSIS] AT SER-11</scope>
    <scope>IDENTIFICATION BY MASS SPECTROMETRY [LARGE SCALE ANALYSIS]</scope>
    <source>
        <tissue>Liver</tissue>
    </source>
</reference>
<reference key="4">
    <citation type="journal article" date="2010" name="Cell">
        <title>A tissue-specific atlas of mouse protein phosphorylation and expression.</title>
        <authorList>
            <person name="Huttlin E.L."/>
            <person name="Jedrychowski M.P."/>
            <person name="Elias J.E."/>
            <person name="Goswami T."/>
            <person name="Rad R."/>
            <person name="Beausoleil S.A."/>
            <person name="Villen J."/>
            <person name="Haas W."/>
            <person name="Sowa M.E."/>
            <person name="Gygi S.P."/>
        </authorList>
    </citation>
    <scope>PHOSPHORYLATION [LARGE SCALE ANALYSIS] AT SER-11</scope>
    <scope>IDENTIFICATION BY MASS SPECTROMETRY [LARGE SCALE ANALYSIS]</scope>
    <source>
        <tissue>Brain</tissue>
        <tissue>Brown adipose tissue</tissue>
        <tissue>Kidney</tissue>
        <tissue>Liver</tissue>
        <tissue>Lung</tissue>
        <tissue>Pancreas</tissue>
        <tissue>Spleen</tissue>
    </source>
</reference>
<reference evidence="8 9" key="5">
    <citation type="journal article" date="2022" name="Nature">
        <title>A male germ-cell-specific ribosome controls male fertility.</title>
        <authorList>
            <person name="Li H."/>
            <person name="Huo Y."/>
            <person name="He X."/>
            <person name="Yao L."/>
            <person name="Zhang H."/>
            <person name="Cui Y."/>
            <person name="Xiao H."/>
            <person name="Xie W."/>
            <person name="Zhang D."/>
            <person name="Wang Y."/>
            <person name="Zhang S."/>
            <person name="Tu H."/>
            <person name="Cheng Y."/>
            <person name="Guo Y."/>
            <person name="Cao X."/>
            <person name="Zhu Y."/>
            <person name="Jiang T."/>
            <person name="Guo X."/>
            <person name="Qin Y."/>
            <person name="Sha J."/>
        </authorList>
    </citation>
    <scope>STRUCTURE BY ELECTRON MICROSCOPY (3.03 ANGSTROMS) OF RIBOSOME</scope>
    <scope>FUNCTION</scope>
    <scope>SUBUNIT</scope>
    <scope>SUBCELLULAR LOCATION</scope>
</reference>
<gene>
    <name evidence="7" type="primary">Rps27</name>
</gene>
<feature type="chain" id="PRO_0000149052" description="Small ribosomal subunit protein eS27">
    <location>
        <begin position="1"/>
        <end position="84"/>
    </location>
</feature>
<feature type="zinc finger region" description="C4-type" evidence="2">
    <location>
        <begin position="38"/>
        <end position="60"/>
    </location>
</feature>
<feature type="region of interest" description="Disordered" evidence="3">
    <location>
        <begin position="1"/>
        <end position="23"/>
    </location>
</feature>
<feature type="compositionally biased region" description="Basic and acidic residues" evidence="3">
    <location>
        <begin position="1"/>
        <end position="16"/>
    </location>
</feature>
<feature type="modified residue" description="Phosphoserine" evidence="10 11">
    <location>
        <position position="11"/>
    </location>
</feature>
<keyword id="KW-0002">3D-structure</keyword>
<keyword id="KW-0963">Cytoplasm</keyword>
<keyword id="KW-0479">Metal-binding</keyword>
<keyword id="KW-0539">Nucleus</keyword>
<keyword id="KW-0597">Phosphoprotein</keyword>
<keyword id="KW-1185">Reference proteome</keyword>
<keyword id="KW-0687">Ribonucleoprotein</keyword>
<keyword id="KW-0689">Ribosomal protein</keyword>
<keyword id="KW-0862">Zinc</keyword>
<keyword id="KW-0863">Zinc-finger</keyword>